<organism>
    <name type="scientific">Caulobacter vibrioides (strain NA1000 / CB15N)</name>
    <name type="common">Caulobacter crescentus</name>
    <dbReference type="NCBI Taxonomy" id="565050"/>
    <lineage>
        <taxon>Bacteria</taxon>
        <taxon>Pseudomonadati</taxon>
        <taxon>Pseudomonadota</taxon>
        <taxon>Alphaproteobacteria</taxon>
        <taxon>Caulobacterales</taxon>
        <taxon>Caulobacteraceae</taxon>
        <taxon>Caulobacter</taxon>
    </lineage>
</organism>
<reference key="1">
    <citation type="journal article" date="2010" name="J. Bacteriol.">
        <title>The genetic basis of laboratory adaptation in Caulobacter crescentus.</title>
        <authorList>
            <person name="Marks M.E."/>
            <person name="Castro-Rojas C.M."/>
            <person name="Teiling C."/>
            <person name="Du L."/>
            <person name="Kapatral V."/>
            <person name="Walunas T.L."/>
            <person name="Crosson S."/>
        </authorList>
    </citation>
    <scope>NUCLEOTIDE SEQUENCE [LARGE SCALE GENOMIC DNA]</scope>
    <source>
        <strain>NA1000 / CB15N</strain>
    </source>
</reference>
<name>NQOR_CAUVN</name>
<gene>
    <name type="ordered locus">CCNA_00833</name>
</gene>
<dbReference type="EC" id="1.6.5.2" evidence="1"/>
<dbReference type="EMBL" id="CP001340">
    <property type="protein sequence ID" value="ACL94298.1"/>
    <property type="molecule type" value="Genomic_DNA"/>
</dbReference>
<dbReference type="RefSeq" id="YP_002516206.1">
    <property type="nucleotide sequence ID" value="NC_011916.1"/>
</dbReference>
<dbReference type="SMR" id="B8H1H5"/>
<dbReference type="GeneID" id="7329869"/>
<dbReference type="KEGG" id="ccs:CCNA_00833"/>
<dbReference type="PATRIC" id="fig|565050.3.peg.820"/>
<dbReference type="HOGENOM" id="CLU_051402_0_2_5"/>
<dbReference type="OrthoDB" id="9801479at2"/>
<dbReference type="PhylomeDB" id="B8H1H5"/>
<dbReference type="Proteomes" id="UP000001364">
    <property type="component" value="Chromosome"/>
</dbReference>
<dbReference type="GO" id="GO:0016020">
    <property type="term" value="C:membrane"/>
    <property type="evidence" value="ECO:0007669"/>
    <property type="project" value="TreeGrafter"/>
</dbReference>
<dbReference type="GO" id="GO:0050660">
    <property type="term" value="F:flavin adenine dinucleotide binding"/>
    <property type="evidence" value="ECO:0007669"/>
    <property type="project" value="UniProtKB-UniRule"/>
</dbReference>
<dbReference type="GO" id="GO:0010181">
    <property type="term" value="F:FMN binding"/>
    <property type="evidence" value="ECO:0007669"/>
    <property type="project" value="InterPro"/>
</dbReference>
<dbReference type="GO" id="GO:0051287">
    <property type="term" value="F:NAD binding"/>
    <property type="evidence" value="ECO:0007669"/>
    <property type="project" value="UniProtKB-UniRule"/>
</dbReference>
<dbReference type="GO" id="GO:0050136">
    <property type="term" value="F:NADH:ubiquinone reductase (non-electrogenic) activity"/>
    <property type="evidence" value="ECO:0007669"/>
    <property type="project" value="RHEA"/>
</dbReference>
<dbReference type="GO" id="GO:0050661">
    <property type="term" value="F:NADP binding"/>
    <property type="evidence" value="ECO:0007669"/>
    <property type="project" value="UniProtKB-UniRule"/>
</dbReference>
<dbReference type="GO" id="GO:0008753">
    <property type="term" value="F:NADPH dehydrogenase (quinone) activity"/>
    <property type="evidence" value="ECO:0007669"/>
    <property type="project" value="RHEA"/>
</dbReference>
<dbReference type="FunFam" id="3.40.50.360:FF:000001">
    <property type="entry name" value="NAD(P)H dehydrogenase (Quinone) FQR1-like"/>
    <property type="match status" value="1"/>
</dbReference>
<dbReference type="Gene3D" id="3.40.50.360">
    <property type="match status" value="1"/>
</dbReference>
<dbReference type="HAMAP" id="MF_01017">
    <property type="entry name" value="NQOR"/>
    <property type="match status" value="1"/>
</dbReference>
<dbReference type="InterPro" id="IPR008254">
    <property type="entry name" value="Flavodoxin/NO_synth"/>
</dbReference>
<dbReference type="InterPro" id="IPR029039">
    <property type="entry name" value="Flavoprotein-like_sf"/>
</dbReference>
<dbReference type="InterPro" id="IPR010089">
    <property type="entry name" value="Flavoprotein_WrbA-like"/>
</dbReference>
<dbReference type="InterPro" id="IPR005025">
    <property type="entry name" value="FMN_Rdtase-like_dom"/>
</dbReference>
<dbReference type="InterPro" id="IPR037513">
    <property type="entry name" value="NQO"/>
</dbReference>
<dbReference type="NCBIfam" id="TIGR01755">
    <property type="entry name" value="flav_wrbA"/>
    <property type="match status" value="1"/>
</dbReference>
<dbReference type="NCBIfam" id="NF002999">
    <property type="entry name" value="PRK03767.1"/>
    <property type="match status" value="1"/>
</dbReference>
<dbReference type="PANTHER" id="PTHR30546">
    <property type="entry name" value="FLAVODOXIN-RELATED PROTEIN WRBA-RELATED"/>
    <property type="match status" value="1"/>
</dbReference>
<dbReference type="PANTHER" id="PTHR30546:SF23">
    <property type="entry name" value="FLAVOPROTEIN-LIKE PROTEIN YCP4-RELATED"/>
    <property type="match status" value="1"/>
</dbReference>
<dbReference type="Pfam" id="PF03358">
    <property type="entry name" value="FMN_red"/>
    <property type="match status" value="1"/>
</dbReference>
<dbReference type="SUPFAM" id="SSF52218">
    <property type="entry name" value="Flavoproteins"/>
    <property type="match status" value="1"/>
</dbReference>
<dbReference type="PROSITE" id="PS50902">
    <property type="entry name" value="FLAVODOXIN_LIKE"/>
    <property type="match status" value="1"/>
</dbReference>
<keyword id="KW-0285">Flavoprotein</keyword>
<keyword id="KW-0288">FMN</keyword>
<keyword id="KW-0520">NAD</keyword>
<keyword id="KW-0521">NADP</keyword>
<keyword id="KW-0547">Nucleotide-binding</keyword>
<keyword id="KW-0560">Oxidoreductase</keyword>
<keyword id="KW-1185">Reference proteome</keyword>
<feature type="chain" id="PRO_1000149006" description="NAD(P)H dehydrogenase (quinone)">
    <location>
        <begin position="1"/>
        <end position="199"/>
    </location>
</feature>
<feature type="domain" description="Flavodoxin-like" evidence="1">
    <location>
        <begin position="4"/>
        <end position="190"/>
    </location>
</feature>
<feature type="binding site" evidence="1">
    <location>
        <begin position="10"/>
        <end position="15"/>
    </location>
    <ligand>
        <name>FMN</name>
        <dbReference type="ChEBI" id="CHEBI:58210"/>
    </ligand>
</feature>
<feature type="binding site" evidence="1">
    <location>
        <position position="12"/>
    </location>
    <ligand>
        <name>NAD(+)</name>
        <dbReference type="ChEBI" id="CHEBI:57540"/>
    </ligand>
</feature>
<feature type="binding site" evidence="1">
    <location>
        <begin position="78"/>
        <end position="80"/>
    </location>
    <ligand>
        <name>FMN</name>
        <dbReference type="ChEBI" id="CHEBI:58210"/>
    </ligand>
</feature>
<feature type="binding site" evidence="1">
    <location>
        <position position="98"/>
    </location>
    <ligand>
        <name>substrate</name>
    </ligand>
</feature>
<feature type="binding site" evidence="1">
    <location>
        <begin position="113"/>
        <end position="119"/>
    </location>
    <ligand>
        <name>FMN</name>
        <dbReference type="ChEBI" id="CHEBI:58210"/>
    </ligand>
</feature>
<feature type="binding site" evidence="1">
    <location>
        <position position="134"/>
    </location>
    <ligand>
        <name>FMN</name>
        <dbReference type="ChEBI" id="CHEBI:58210"/>
    </ligand>
</feature>
<protein>
    <recommendedName>
        <fullName evidence="1">NAD(P)H dehydrogenase (quinone)</fullName>
        <ecNumber evidence="1">1.6.5.2</ecNumber>
    </recommendedName>
    <alternativeName>
        <fullName>Flavoprotein WrbA</fullName>
    </alternativeName>
    <alternativeName>
        <fullName evidence="1">NAD(P)H:quinone oxidoreductase</fullName>
        <shortName evidence="1">NQO</shortName>
    </alternativeName>
</protein>
<evidence type="ECO:0000255" key="1">
    <source>
        <dbReference type="HAMAP-Rule" id="MF_01017"/>
    </source>
</evidence>
<comment type="catalytic activity">
    <reaction evidence="1">
        <text>a quinone + NADH + H(+) = a quinol + NAD(+)</text>
        <dbReference type="Rhea" id="RHEA:46160"/>
        <dbReference type="ChEBI" id="CHEBI:15378"/>
        <dbReference type="ChEBI" id="CHEBI:24646"/>
        <dbReference type="ChEBI" id="CHEBI:57540"/>
        <dbReference type="ChEBI" id="CHEBI:57945"/>
        <dbReference type="ChEBI" id="CHEBI:132124"/>
        <dbReference type="EC" id="1.6.5.2"/>
    </reaction>
</comment>
<comment type="catalytic activity">
    <reaction evidence="1">
        <text>a quinone + NADPH + H(+) = a quinol + NADP(+)</text>
        <dbReference type="Rhea" id="RHEA:46164"/>
        <dbReference type="ChEBI" id="CHEBI:15378"/>
        <dbReference type="ChEBI" id="CHEBI:24646"/>
        <dbReference type="ChEBI" id="CHEBI:57783"/>
        <dbReference type="ChEBI" id="CHEBI:58349"/>
        <dbReference type="ChEBI" id="CHEBI:132124"/>
        <dbReference type="EC" id="1.6.5.2"/>
    </reaction>
</comment>
<comment type="cofactor">
    <cofactor evidence="1">
        <name>FMN</name>
        <dbReference type="ChEBI" id="CHEBI:58210"/>
    </cofactor>
    <text evidence="1">Binds 1 FMN per monomer.</text>
</comment>
<comment type="similarity">
    <text evidence="1">Belongs to the WrbA family.</text>
</comment>
<sequence length="199" mass="20856">MAKVLVLYYSSYGHLEVMAKAIAEGAREAGASVDIKRVPETVPLEIAKGAHFKLDQDAPVAKVEDLADYDAIIVGAPTRFGRMASQMAAFFDAAGGLWARGALHGKVAGAFTSTATQHGGQETTLFSIITNMLHFGTTIVGLDYGHAGQMTLDEITGGSPYGATTIAGGDGSRQPSENELTGARYQGRKIAETAIKLHG</sequence>
<accession>B8H1H5</accession>
<proteinExistence type="inferred from homology"/>